<accession>Q83XD3</accession>
<reference key="1">
    <citation type="journal article" date="2005" name="J. Bacteriol.">
        <title>Polyphosphate:AMP phosphotransferase as a polyphosphate-dependent nucleoside monophosphate kinase in Acinetobacter johnsonii 210A.</title>
        <authorList>
            <person name="Shiba T."/>
            <person name="Itoh H."/>
            <person name="Kameda A."/>
            <person name="Kobayashi K."/>
            <person name="Kawazoe Y."/>
            <person name="Noguchi T."/>
        </authorList>
    </citation>
    <scope>NUCLEOTIDE SEQUENCE [GENOMIC DNA]</scope>
    <scope>PROTEIN SEQUENCE OF 1-10</scope>
    <scope>FUNCTION</scope>
    <scope>CATALYTIC ACTIVITY</scope>
    <scope>COFACTOR</scope>
    <scope>BIOPHYSICOCHEMICAL PROPERTIES</scope>
    <scope>SUBUNIT</scope>
    <source>
        <strain>210A</strain>
    </source>
</reference>
<reference key="2">
    <citation type="journal article" date="1991" name="J. Bacteriol.">
        <title>Properties of polyphosphate:AMP phosphotransferase of Acinetobacter strain 210A.</title>
        <authorList>
            <person name="Bonting C.F."/>
            <person name="Kortstee G.J."/>
            <person name="Zehnder A.J."/>
        </authorList>
    </citation>
    <scope>FUNCTION</scope>
    <scope>CATALYTIC ACTIVITY</scope>
    <scope>BIOPHYSICOCHEMICAL PROPERTIES</scope>
    <source>
        <strain>210A</strain>
    </source>
</reference>
<reference key="3">
    <citation type="journal article" date="2004" name="J. Bacteriol.">
        <title>Polyphosphate synthetic activity of polyphosphate:AMP phosphotransferase in Acinetobacter johnsonii 210A.</title>
        <authorList>
            <person name="Itoh H."/>
            <person name="Shiba T."/>
        </authorList>
    </citation>
    <scope>FUNCTION</scope>
    <scope>CATALYTIC ACTIVITY</scope>
    <scope>COFACTOR</scope>
    <scope>BIOPHYSICOCHEMICAL PROPERTIES</scope>
    <source>
        <strain>210A</strain>
    </source>
</reference>
<gene>
    <name evidence="5" type="primary">pap</name>
</gene>
<sequence length="475" mass="55838">MDTETIASAVLNEEQLSLDLIEAQYALMNTRDQSNAKSLVILVSGIELAGKGEAVKQLREWVDPRFLYVKADPPHLFNLKQPFWQPYTRFVPAEGQIMVWFGNWYGDLLATAMHASKPLDDTLFDEYVSNMRAFEQDLKNNNVDVLKVWFDLSWKSLQKRLDDMDPSEVHWHKLHGLDWRNKKQYDTLQKLRTRFTDDWQIIDGEDEDLRNHNFAQAILTALRHCPEHEKKAALKWQQAPIPDILTQFEVPQAEDANYKSELKKLTKQVADAMRCDDRKVVIAFEGMDAAGKGGAIKRIVKKLDPREYEIHTIAAPEKYELRRPYLWRFWSKLQSDDITIFDRTWYGRVLVERVEGFATEVEWQRAYAEINRFEKNLSSSQTVLIKFWLAIDKDEQAARFKARESTPHKRFKITEEDWRNRDKWDDYLKAAADMFAHTDTSYAPWYIISTNDKQQARIEVLRAILKQLKADRDTD</sequence>
<feature type="chain" id="PRO_0000442596" description="Polyphosphate:AMP phosphotransferase">
    <location>
        <begin position="1"/>
        <end position="475"/>
    </location>
</feature>
<feature type="region of interest" description="PPK2 1" evidence="7">
    <location>
        <begin position="18"/>
        <end position="222"/>
    </location>
</feature>
<feature type="region of interest" description="PPK2 2" evidence="7">
    <location>
        <begin position="256"/>
        <end position="472"/>
    </location>
</feature>
<proteinExistence type="evidence at protein level"/>
<comment type="function">
    <text evidence="1 2 3">Uses inorganic polyphosphate (polyP) as a donor to convert AMP to ADP. Can also use GMP, UMP, CMP, TMP or deoxyribonucleoside monophosphates, with lower efficiency. Cannot use low-molecular weight polyP as donors. Can also catalyze the synthesis of polyP from ADP or GDP, with lower efficiency.</text>
</comment>
<comment type="catalytic activity">
    <reaction evidence="1 2 3">
        <text>[phosphate](n) + ADP = [phosphate](n+1) + AMP</text>
        <dbReference type="Rhea" id="RHEA:57820"/>
        <dbReference type="Rhea" id="RHEA-COMP:9859"/>
        <dbReference type="Rhea" id="RHEA-COMP:14280"/>
        <dbReference type="ChEBI" id="CHEBI:16838"/>
        <dbReference type="ChEBI" id="CHEBI:456215"/>
        <dbReference type="ChEBI" id="CHEBI:456216"/>
        <dbReference type="EC" id="2.7.4.33"/>
    </reaction>
</comment>
<comment type="cofactor">
    <cofactor evidence="1 2">
        <name>Mg(2+)</name>
        <dbReference type="ChEBI" id="CHEBI:18420"/>
    </cofactor>
    <text evidence="1 2">Lower concentrations of MgCl(2) are required to obtain optimum polyP synthetic activity, whereas higher concentrations of MgCl(2) are necessary for optimum PAP activity.</text>
</comment>
<comment type="biophysicochemical properties">
    <kinetics>
        <KM evidence="3">0.26 mM for AMP</KM>
        <KM evidence="2">4.4 mM for GMP</KM>
        <KM evidence="3">0.8 uM for polyP</KM>
        <KM evidence="1">8.3 mM for ADP</KM>
        <Vmax evidence="1 2">180.0 umol/min/mg enzyme with AMP as substrate for ADP formation</Vmax>
        <Vmax evidence="2">37.0 umol/min/mg enzyme with GMP as substrate for GDP formation</Vmax>
        <Vmax evidence="1">55.0 umol/min/mg enzyme with ADP as substrate for polyP formation</Vmax>
    </kinetics>
    <phDependence>
        <text evidence="2 3">Optimum pH is 6.5-8.5 (PubMed:1655714). Optimum pH is 8.0-9.0 (PubMed:15716459).</text>
    </phDependence>
    <temperatureDependence>
        <text evidence="2">Optimum temperature is 50 degrees Celsius.</text>
    </temperatureDependence>
</comment>
<comment type="subunit">
    <text evidence="2">Homodimer and homotetramer.</text>
</comment>
<comment type="similarity">
    <text evidence="7">Belongs to the polyphosphate kinase 2 (PPK2) family. Class II subfamily.</text>
</comment>
<protein>
    <recommendedName>
        <fullName evidence="6">Polyphosphate:AMP phosphotransferase</fullName>
        <shortName evidence="4">PAP</shortName>
        <ecNumber evidence="1 2 3">2.7.4.33</ecNumber>
    </recommendedName>
    <alternativeName>
        <fullName evidence="7">Polyphosphate kinase PPK2</fullName>
    </alternativeName>
</protein>
<name>PK22_ACIJO</name>
<evidence type="ECO:0000269" key="1">
    <source>
    </source>
</evidence>
<evidence type="ECO:0000269" key="2">
    <source>
    </source>
</evidence>
<evidence type="ECO:0000269" key="3">
    <source>
    </source>
</evidence>
<evidence type="ECO:0000303" key="4">
    <source>
    </source>
</evidence>
<evidence type="ECO:0000303" key="5">
    <source>
    </source>
</evidence>
<evidence type="ECO:0000303" key="6">
    <source>
    </source>
</evidence>
<evidence type="ECO:0000305" key="7"/>
<dbReference type="EC" id="2.7.4.33" evidence="1 2 3"/>
<dbReference type="EMBL" id="AB092983">
    <property type="protein sequence ID" value="BAC76403.1"/>
    <property type="molecule type" value="Genomic_DNA"/>
</dbReference>
<dbReference type="RefSeq" id="WP_178927831.1">
    <property type="nucleotide sequence ID" value="NZ_JAOCDY010000013.1"/>
</dbReference>
<dbReference type="SMR" id="Q83XD3"/>
<dbReference type="BRENDA" id="2.7.4.1">
    <property type="organism ID" value="103"/>
</dbReference>
<dbReference type="BRENDA" id="2.7.4.33">
    <property type="organism ID" value="103"/>
</dbReference>
<dbReference type="GO" id="GO:0016301">
    <property type="term" value="F:kinase activity"/>
    <property type="evidence" value="ECO:0007669"/>
    <property type="project" value="UniProtKB-KW"/>
</dbReference>
<dbReference type="Gene3D" id="3.40.50.300">
    <property type="entry name" value="P-loop containing nucleotide triphosphate hydrolases"/>
    <property type="match status" value="2"/>
</dbReference>
<dbReference type="InterPro" id="IPR027417">
    <property type="entry name" value="P-loop_NTPase"/>
</dbReference>
<dbReference type="InterPro" id="IPR022488">
    <property type="entry name" value="PPK2-related"/>
</dbReference>
<dbReference type="PANTHER" id="PTHR34383">
    <property type="entry name" value="POLYPHOSPHATE:AMP PHOSPHOTRANSFERASE-RELATED"/>
    <property type="match status" value="1"/>
</dbReference>
<dbReference type="Pfam" id="PF03976">
    <property type="entry name" value="PPK2"/>
    <property type="match status" value="2"/>
</dbReference>
<dbReference type="SUPFAM" id="SSF52540">
    <property type="entry name" value="P-loop containing nucleoside triphosphate hydrolases"/>
    <property type="match status" value="1"/>
</dbReference>
<keyword id="KW-0903">Direct protein sequencing</keyword>
<keyword id="KW-0418">Kinase</keyword>
<keyword id="KW-0460">Magnesium</keyword>
<keyword id="KW-0677">Repeat</keyword>
<keyword id="KW-0808">Transferase</keyword>
<organism>
    <name type="scientific">Acinetobacter johnsonii</name>
    <dbReference type="NCBI Taxonomy" id="40214"/>
    <lineage>
        <taxon>Bacteria</taxon>
        <taxon>Pseudomonadati</taxon>
        <taxon>Pseudomonadota</taxon>
        <taxon>Gammaproteobacteria</taxon>
        <taxon>Moraxellales</taxon>
        <taxon>Moraxellaceae</taxon>
        <taxon>Acinetobacter</taxon>
    </lineage>
</organism>